<sequence length="697" mass="77752">MQTQEILRILRLPELGDLGQFFRSLSATTLVSMGALAAILAYWFTHRPKALQPPCNLLMQSEEVEDSGGARRSVIGSGPQLLTHYYDDARTMYQVFRRGLSISGNGPCLGFRKPKQPYQWLSYQEVADRAEFLGSGLLQHNCKACTDQFIGVFAQNRPEWIIVELACYTYSMVVVPLYDTLGPGAIRYIINTADISTVIVDKPQKAVLLLEHVERKETPGLKLIILMDPFEEALKERGQKCGVVIKSMQAVEDCGQENHQAPVPPQPDDLSIVCFTSGTTGNPKGAMLTHGNVVADFSGFLKVTEKVIFPRQDDVLISFLPLAHMFERVIQSVVYCHGGRVGFFQGDIRLLSDDMKALCPTIFPVVPRLLNRMYDKIFSQANTPLKRWLLEFAAKRKQAEVRSGIIRNDSIWDELFFNKIQASLGGCVRMIVTGAAPASPTVLGFLRAALGCQVYEGYGQTECTAGCTFTTPGDWTSGHVGAPLPCNHIKLVDVEELNYWACKGEGEICVRGPNVFKGYLKDPDRTKEALDSDGWLHTGDIGKWLPAGTLKIIDRKKHIFKLAQGEYVAPEKIENIYIRSQPVAQIYVHGDSLKAFLVGIVVPDPEVMPSWAQKRGIEGTYADLCTNKDLKKAILEDMVRLGKESGLHSFEQVKAIHIHSDMFSVQNGLLTPTLKAKRPELREYFKKQIEELYSISM</sequence>
<reference key="1">
    <citation type="journal article" date="1999" name="Biochem. J.">
        <title>Identification and molecular characterization of acyl-CoA synthetase in human red cells and erythroid precursor.</title>
        <authorList>
            <person name="Malhotra K.T."/>
            <person name="Malhotra K."/>
            <person name="Lubin B.H."/>
            <person name="Kuypers F.A."/>
        </authorList>
    </citation>
    <scope>NUCLEOTIDE SEQUENCE [MRNA] (ISOFORM 3)</scope>
    <scope>TISSUE SPECIFICITY</scope>
</reference>
<reference key="2">
    <citation type="journal article" date="1999" name="Genes Chromosomes Cancer">
        <title>Fusion of TEL/ETV6 to a novel ACS2 in myelodysplastic syndrome and acute myelogenous leukemia with t(5;12)(q31;p13).</title>
        <authorList>
            <person name="Yagasaki F."/>
            <person name="Jinnai I."/>
            <person name="Yoshida S."/>
            <person name="Yokoyama Y."/>
            <person name="Matsuda A."/>
            <person name="Kusumoto S."/>
            <person name="Kobayashi H."/>
            <person name="Terasaki H."/>
            <person name="Ohyashiki K."/>
            <person name="Asou N."/>
            <person name="Murohashi I."/>
            <person name="Bessho M."/>
            <person name="Hirashima K."/>
        </authorList>
    </citation>
    <scope>NUCLEOTIDE SEQUENCE [MRNA] (ISOFORM 2)</scope>
    <scope>CHROMOSOMAL TRANSLOCATION WITH ETV6</scope>
    <source>
        <tissue>Bone marrow</tissue>
    </source>
</reference>
<reference key="3">
    <citation type="journal article" date="2006" name="BMC Mol. Biol.">
        <title>Multiple erythroid isoforms of human long-chain acyl-CoA synthetases are produced by switch of the fatty acid gate domains.</title>
        <authorList>
            <person name="Soupene E."/>
            <person name="Kuypers F.A."/>
        </authorList>
    </citation>
    <scope>NUCLEOTIDE SEQUENCE [MRNA] (ISOFORM 6)</scope>
    <scope>NUCLEOTIDE SEQUENCE [MRNA] OF 253-374 (ISOFORM 5)</scope>
    <scope>ALTERNATIVE SPLICING (ISOFORM 8)</scope>
</reference>
<reference key="4">
    <citation type="journal article" date="1998" name="DNA Res.">
        <title>Prediction of the coding sequences of unidentified human genes. XII. The complete sequences of 100 new cDNA clones from brain which code for large proteins in vitro.</title>
        <authorList>
            <person name="Nagase T."/>
            <person name="Ishikawa K."/>
            <person name="Suyama M."/>
            <person name="Kikuno R."/>
            <person name="Hirosawa M."/>
            <person name="Miyajima N."/>
            <person name="Tanaka A."/>
            <person name="Kotani H."/>
            <person name="Nomura N."/>
            <person name="Ohara O."/>
        </authorList>
    </citation>
    <scope>NUCLEOTIDE SEQUENCE [LARGE SCALE MRNA] (ISOFORM 1)</scope>
    <source>
        <tissue>Brain</tissue>
    </source>
</reference>
<reference key="5">
    <citation type="submission" date="2004-07" db="EMBL/GenBank/DDBJ databases">
        <title>Full-length cDNA libraries and normalization.</title>
        <authorList>
            <person name="Li W.B."/>
            <person name="Gruber C."/>
            <person name="Jessee J."/>
            <person name="Polayes D."/>
        </authorList>
    </citation>
    <scope>NUCLEOTIDE SEQUENCE [LARGE SCALE MRNA] (ISOFORM 4)</scope>
    <source>
        <tissue>Brain</tissue>
    </source>
</reference>
<reference key="6">
    <citation type="journal article" date="2004" name="Nature">
        <title>The DNA sequence and comparative analysis of human chromosome 5.</title>
        <authorList>
            <person name="Schmutz J."/>
            <person name="Martin J."/>
            <person name="Terry A."/>
            <person name="Couronne O."/>
            <person name="Grimwood J."/>
            <person name="Lowry S."/>
            <person name="Gordon L.A."/>
            <person name="Scott D."/>
            <person name="Xie G."/>
            <person name="Huang W."/>
            <person name="Hellsten U."/>
            <person name="Tran-Gyamfi M."/>
            <person name="She X."/>
            <person name="Prabhakar S."/>
            <person name="Aerts A."/>
            <person name="Altherr M."/>
            <person name="Bajorek E."/>
            <person name="Black S."/>
            <person name="Branscomb E."/>
            <person name="Caoile C."/>
            <person name="Challacombe J.F."/>
            <person name="Chan Y.M."/>
            <person name="Denys M."/>
            <person name="Detter J.C."/>
            <person name="Escobar J."/>
            <person name="Flowers D."/>
            <person name="Fotopulos D."/>
            <person name="Glavina T."/>
            <person name="Gomez M."/>
            <person name="Gonzales E."/>
            <person name="Goodstein D."/>
            <person name="Grigoriev I."/>
            <person name="Groza M."/>
            <person name="Hammon N."/>
            <person name="Hawkins T."/>
            <person name="Haydu L."/>
            <person name="Israni S."/>
            <person name="Jett J."/>
            <person name="Kadner K."/>
            <person name="Kimball H."/>
            <person name="Kobayashi A."/>
            <person name="Lopez F."/>
            <person name="Lou Y."/>
            <person name="Martinez D."/>
            <person name="Medina C."/>
            <person name="Morgan J."/>
            <person name="Nandkeshwar R."/>
            <person name="Noonan J.P."/>
            <person name="Pitluck S."/>
            <person name="Pollard M."/>
            <person name="Predki P."/>
            <person name="Priest J."/>
            <person name="Ramirez L."/>
            <person name="Retterer J."/>
            <person name="Rodriguez A."/>
            <person name="Rogers S."/>
            <person name="Salamov A."/>
            <person name="Salazar A."/>
            <person name="Thayer N."/>
            <person name="Tice H."/>
            <person name="Tsai M."/>
            <person name="Ustaszewska A."/>
            <person name="Vo N."/>
            <person name="Wheeler J."/>
            <person name="Wu K."/>
            <person name="Yang J."/>
            <person name="Dickson M."/>
            <person name="Cheng J.-F."/>
            <person name="Eichler E.E."/>
            <person name="Olsen A."/>
            <person name="Pennacchio L.A."/>
            <person name="Rokhsar D.S."/>
            <person name="Richardson P."/>
            <person name="Lucas S.M."/>
            <person name="Myers R.M."/>
            <person name="Rubin E.M."/>
        </authorList>
    </citation>
    <scope>NUCLEOTIDE SEQUENCE [LARGE SCALE GENOMIC DNA]</scope>
    <scope>ALTERNATIVE SPLICING (ISOFORM 8)</scope>
</reference>
<reference key="7">
    <citation type="journal article" date="2004" name="Genome Res.">
        <title>The status, quality, and expansion of the NIH full-length cDNA project: the Mammalian Gene Collection (MGC).</title>
        <authorList>
            <consortium name="The MGC Project Team"/>
        </authorList>
    </citation>
    <scope>NUCLEOTIDE SEQUENCE [LARGE SCALE MRNA] (ISOFORMS 7 AND 9)</scope>
    <source>
        <tissue>Testis</tissue>
    </source>
</reference>
<reference key="8">
    <citation type="journal article" date="2012" name="Mol. Cell">
        <title>The Sjogren-Larsson syndrome gene encodes a hexadecenal dehydrogenase of the sphingosine 1-phosphate degradation pathway.</title>
        <authorList>
            <person name="Nakahara K."/>
            <person name="Ohkuni A."/>
            <person name="Kitamura T."/>
            <person name="Abe K."/>
            <person name="Naganuma T."/>
            <person name="Ohno Y."/>
            <person name="Zoeller R.A."/>
            <person name="Kihara A."/>
        </authorList>
    </citation>
    <scope>CATALYTIC ACTIVITY</scope>
    <scope>FUNCTION</scope>
</reference>
<reference key="9">
    <citation type="journal article" date="2013" name="Biochem. Biophys. Res. Commun.">
        <title>Identification of acyl-CoA synthetases involved in the mammalian sphingosine 1-phosphate metabolic pathway.</title>
        <authorList>
            <person name="Ohkuni A."/>
            <person name="Ohno Y."/>
            <person name="Kihara A."/>
        </authorList>
    </citation>
    <scope>CATALYTIC ACTIVITY</scope>
    <scope>FUNCTION</scope>
    <scope>SUBCELLULAR LOCATION</scope>
</reference>
<name>ACSL6_HUMAN</name>
<dbReference type="EC" id="6.2.1.3" evidence="6 7"/>
<dbReference type="EC" id="6.2.1.15" evidence="2"/>
<dbReference type="EMBL" id="AF129166">
    <property type="protein sequence ID" value="AAD47199.1"/>
    <property type="molecule type" value="mRNA"/>
</dbReference>
<dbReference type="EMBL" id="AF099740">
    <property type="protein sequence ID" value="AAD17853.1"/>
    <property type="molecule type" value="mRNA"/>
</dbReference>
<dbReference type="EMBL" id="DQ083030">
    <property type="protein sequence ID" value="AAZ30713.1"/>
    <property type="molecule type" value="mRNA"/>
</dbReference>
<dbReference type="EMBL" id="DQ083031">
    <property type="protein sequence ID" value="AAZ30714.1"/>
    <property type="molecule type" value="mRNA"/>
</dbReference>
<dbReference type="EMBL" id="AB020644">
    <property type="protein sequence ID" value="BAA74860.1"/>
    <property type="status" value="ALT_INIT"/>
    <property type="molecule type" value="mRNA"/>
</dbReference>
<dbReference type="EMBL" id="CR606980">
    <property type="status" value="NOT_ANNOTATED_CDS"/>
    <property type="molecule type" value="mRNA"/>
</dbReference>
<dbReference type="EMBL" id="AC025772">
    <property type="status" value="NOT_ANNOTATED_CDS"/>
    <property type="molecule type" value="Genomic_DNA"/>
</dbReference>
<dbReference type="EMBL" id="AC026398">
    <property type="status" value="NOT_ANNOTATED_CDS"/>
    <property type="molecule type" value="Genomic_DNA"/>
</dbReference>
<dbReference type="EMBL" id="AC034228">
    <property type="status" value="NOT_ANNOTATED_CDS"/>
    <property type="molecule type" value="Genomic_DNA"/>
</dbReference>
<dbReference type="EMBL" id="BC026161">
    <property type="protein sequence ID" value="AAH26161.1"/>
    <property type="status" value="ALT_SEQ"/>
    <property type="molecule type" value="mRNA"/>
</dbReference>
<dbReference type="EMBL" id="BC047453">
    <property type="protein sequence ID" value="AAH47453.1"/>
    <property type="molecule type" value="mRNA"/>
</dbReference>
<dbReference type="CCDS" id="CCDS34228.1">
    <molecule id="Q9UKU0-8"/>
</dbReference>
<dbReference type="CCDS" id="CCDS34229.1">
    <molecule id="Q9UKU0-1"/>
</dbReference>
<dbReference type="CCDS" id="CCDS56381.1">
    <molecule id="Q9UKU0-3"/>
</dbReference>
<dbReference type="CCDS" id="CCDS56382.1">
    <molecule id="Q9UKU0-7"/>
</dbReference>
<dbReference type="CCDS" id="CCDS56383.1">
    <molecule id="Q9UKU0-9"/>
</dbReference>
<dbReference type="RefSeq" id="NP_001009185.1">
    <molecule id="Q9UKU0-1"/>
    <property type="nucleotide sequence ID" value="NM_001009185.3"/>
</dbReference>
<dbReference type="RefSeq" id="NP_001192176.1">
    <property type="nucleotide sequence ID" value="NM_001205247.1"/>
</dbReference>
<dbReference type="RefSeq" id="NP_001192177.1">
    <molecule id="Q9UKU0-3"/>
    <property type="nucleotide sequence ID" value="NM_001205248.2"/>
</dbReference>
<dbReference type="RefSeq" id="NP_001192179.1">
    <molecule id="Q9UKU0-9"/>
    <property type="nucleotide sequence ID" value="NM_001205250.1"/>
</dbReference>
<dbReference type="RefSeq" id="NP_001192180.1">
    <molecule id="Q9UKU0-7"/>
    <property type="nucleotide sequence ID" value="NM_001205251.2"/>
</dbReference>
<dbReference type="RefSeq" id="NP_001392408.1">
    <molecule id="Q9UKU0-4"/>
    <property type="nucleotide sequence ID" value="NM_001405479.1"/>
</dbReference>
<dbReference type="RefSeq" id="NP_001392409.1">
    <molecule id="Q9UKU0-4"/>
    <property type="nucleotide sequence ID" value="NM_001405480.1"/>
</dbReference>
<dbReference type="RefSeq" id="NP_001392410.1">
    <molecule id="Q9UKU0-3"/>
    <property type="nucleotide sequence ID" value="NM_001405481.1"/>
</dbReference>
<dbReference type="RefSeq" id="NP_001392411.1">
    <molecule id="Q9UKU0-4"/>
    <property type="nucleotide sequence ID" value="NM_001405482.1"/>
</dbReference>
<dbReference type="RefSeq" id="NP_001392412.1">
    <molecule id="Q9UKU0-4"/>
    <property type="nucleotide sequence ID" value="NM_001405483.1"/>
</dbReference>
<dbReference type="RefSeq" id="NP_001392413.1">
    <molecule id="Q9UKU0-3"/>
    <property type="nucleotide sequence ID" value="NM_001405484.1"/>
</dbReference>
<dbReference type="RefSeq" id="NP_001392419.1">
    <molecule id="Q9UKU0-7"/>
    <property type="nucleotide sequence ID" value="NM_001405490.1"/>
</dbReference>
<dbReference type="RefSeq" id="NP_056071.2">
    <molecule id="Q9UKU0-8"/>
    <property type="nucleotide sequence ID" value="NM_015256.4"/>
</dbReference>
<dbReference type="SMR" id="Q9UKU0"/>
<dbReference type="BioGRID" id="116897">
    <property type="interactions" value="10"/>
</dbReference>
<dbReference type="FunCoup" id="Q9UKU0">
    <property type="interactions" value="1211"/>
</dbReference>
<dbReference type="IntAct" id="Q9UKU0">
    <property type="interactions" value="6"/>
</dbReference>
<dbReference type="STRING" id="9606.ENSP00000498260"/>
<dbReference type="BindingDB" id="Q9UKU0"/>
<dbReference type="ChEMBL" id="CHEMBL4680042"/>
<dbReference type="SwissLipids" id="SLP:000000203"/>
<dbReference type="iPTMnet" id="Q9UKU0"/>
<dbReference type="PhosphoSitePlus" id="Q9UKU0"/>
<dbReference type="SwissPalm" id="Q9UKU0"/>
<dbReference type="BioMuta" id="ACSL6"/>
<dbReference type="DMDM" id="146322303"/>
<dbReference type="jPOST" id="Q9UKU0"/>
<dbReference type="MassIVE" id="Q9UKU0"/>
<dbReference type="PaxDb" id="9606-ENSP00000368566"/>
<dbReference type="PeptideAtlas" id="Q9UKU0"/>
<dbReference type="ProteomicsDB" id="84870">
    <molecule id="Q9UKU0-4"/>
</dbReference>
<dbReference type="ProteomicsDB" id="84871">
    <molecule id="Q9UKU0-1"/>
</dbReference>
<dbReference type="ProteomicsDB" id="84872">
    <molecule id="Q9UKU0-2"/>
</dbReference>
<dbReference type="ProteomicsDB" id="84873">
    <molecule id="Q9UKU0-3"/>
</dbReference>
<dbReference type="ProteomicsDB" id="84874">
    <molecule id="Q9UKU0-5"/>
</dbReference>
<dbReference type="ProteomicsDB" id="84875">
    <molecule id="Q9UKU0-6"/>
</dbReference>
<dbReference type="ProteomicsDB" id="84876">
    <molecule id="Q9UKU0-7"/>
</dbReference>
<dbReference type="ProteomicsDB" id="84877">
    <molecule id="Q9UKU0-8"/>
</dbReference>
<dbReference type="Antibodypedia" id="25915">
    <property type="antibodies" value="201 antibodies from 29 providers"/>
</dbReference>
<dbReference type="DNASU" id="23305"/>
<dbReference type="Ensembl" id="ENST00000357096.5">
    <molecule id="Q9UKU0-7"/>
    <property type="protein sequence ID" value="ENSP00000349608.1"/>
    <property type="gene ID" value="ENSG00000164398.15"/>
</dbReference>
<dbReference type="Ensembl" id="ENST00000379240.5">
    <molecule id="Q9UKU0-4"/>
    <property type="protein sequence ID" value="ENSP00000368542.1"/>
    <property type="gene ID" value="ENSG00000164398.15"/>
</dbReference>
<dbReference type="Ensembl" id="ENST00000379244.5">
    <molecule id="Q9UKU0-3"/>
    <property type="protein sequence ID" value="ENSP00000368546.1"/>
    <property type="gene ID" value="ENSG00000164398.15"/>
</dbReference>
<dbReference type="Ensembl" id="ENST00000379246.5">
    <molecule id="Q9UKU0-9"/>
    <property type="protein sequence ID" value="ENSP00000368548.1"/>
    <property type="gene ID" value="ENSG00000164398.15"/>
</dbReference>
<dbReference type="Ensembl" id="ENST00000379255.5">
    <molecule id="Q9UKU0-7"/>
    <property type="protein sequence ID" value="ENSP00000368557.1"/>
    <property type="gene ID" value="ENSG00000164398.15"/>
</dbReference>
<dbReference type="Ensembl" id="ENST00000543479.5">
    <molecule id="Q9UKU0-6"/>
    <property type="protein sequence ID" value="ENSP00000442124.2"/>
    <property type="gene ID" value="ENSG00000164398.15"/>
</dbReference>
<dbReference type="Ensembl" id="ENST00000651356.1">
    <molecule id="Q9UKU0-8"/>
    <property type="protein sequence ID" value="ENSP00000498260.1"/>
    <property type="gene ID" value="ENSG00000164398.15"/>
</dbReference>
<dbReference type="Ensembl" id="ENST00000651883.2">
    <molecule id="Q9UKU0-1"/>
    <property type="protein sequence ID" value="ENSP00000499063.2"/>
    <property type="gene ID" value="ENSG00000164398.15"/>
</dbReference>
<dbReference type="GeneID" id="23305"/>
<dbReference type="KEGG" id="hsa:23305"/>
<dbReference type="MANE-Select" id="ENST00000651883.2">
    <molecule id="Q9UKU0-1"/>
    <property type="protein sequence ID" value="ENSP00000499063.2"/>
    <property type="RefSeq nucleotide sequence ID" value="NM_001009185.3"/>
    <property type="RefSeq protein sequence ID" value="NP_001009185.1"/>
</dbReference>
<dbReference type="UCSC" id="uc003kvv.3">
    <molecule id="Q9UKU0-4"/>
    <property type="organism name" value="human"/>
</dbReference>
<dbReference type="AGR" id="HGNC:16496"/>
<dbReference type="CTD" id="23305"/>
<dbReference type="DisGeNET" id="23305"/>
<dbReference type="GeneCards" id="ACSL6"/>
<dbReference type="HGNC" id="HGNC:16496">
    <property type="gene designation" value="ACSL6"/>
</dbReference>
<dbReference type="HPA" id="ENSG00000164398">
    <property type="expression patterns" value="Tissue enhanced (bone marrow, brain, retina)"/>
</dbReference>
<dbReference type="MalaCards" id="ACSL6"/>
<dbReference type="MIM" id="604443">
    <property type="type" value="gene"/>
</dbReference>
<dbReference type="neXtProt" id="NX_Q9UKU0"/>
<dbReference type="OpenTargets" id="ENSG00000164398"/>
<dbReference type="PharmGKB" id="PA27970"/>
<dbReference type="VEuPathDB" id="HostDB:ENSG00000164398"/>
<dbReference type="eggNOG" id="KOG1256">
    <property type="taxonomic scope" value="Eukaryota"/>
</dbReference>
<dbReference type="GeneTree" id="ENSGT00940000162308"/>
<dbReference type="HOGENOM" id="CLU_000022_45_4_1"/>
<dbReference type="InParanoid" id="Q9UKU0"/>
<dbReference type="OMA" id="KCPIVEH"/>
<dbReference type="OrthoDB" id="1700726at2759"/>
<dbReference type="PAN-GO" id="Q9UKU0">
    <property type="GO annotations" value="6 GO annotations based on evolutionary models"/>
</dbReference>
<dbReference type="PhylomeDB" id="Q9UKU0"/>
<dbReference type="TreeFam" id="TF313877"/>
<dbReference type="BioCyc" id="MetaCyc:HS15193-MONOMER"/>
<dbReference type="BRENDA" id="6.2.1.3">
    <property type="organism ID" value="2681"/>
</dbReference>
<dbReference type="PathwayCommons" id="Q9UKU0"/>
<dbReference type="Reactome" id="R-HSA-75876">
    <property type="pathway name" value="Synthesis of very long-chain fatty acyl-CoAs"/>
</dbReference>
<dbReference type="SignaLink" id="Q9UKU0"/>
<dbReference type="BioGRID-ORCS" id="23305">
    <property type="hits" value="6 hits in 1149 CRISPR screens"/>
</dbReference>
<dbReference type="CD-CODE" id="FB4E32DD">
    <property type="entry name" value="Presynaptic clusters and postsynaptic densities"/>
</dbReference>
<dbReference type="ChiTaRS" id="ACSL6">
    <property type="organism name" value="human"/>
</dbReference>
<dbReference type="GeneWiki" id="ACSL6"/>
<dbReference type="GenomeRNAi" id="23305"/>
<dbReference type="Pharos" id="Q9UKU0">
    <property type="development level" value="Tbio"/>
</dbReference>
<dbReference type="PRO" id="PR:Q9UKU0"/>
<dbReference type="Proteomes" id="UP000005640">
    <property type="component" value="Chromosome 5"/>
</dbReference>
<dbReference type="RNAct" id="Q9UKU0">
    <property type="molecule type" value="protein"/>
</dbReference>
<dbReference type="Bgee" id="ENSG00000164398">
    <property type="expression patterns" value="Expressed in lateral nuclear group of thalamus and 140 other cell types or tissues"/>
</dbReference>
<dbReference type="ExpressionAtlas" id="Q9UKU0">
    <property type="expression patterns" value="baseline and differential"/>
</dbReference>
<dbReference type="GO" id="GO:0005783">
    <property type="term" value="C:endoplasmic reticulum"/>
    <property type="evidence" value="ECO:0000314"/>
    <property type="project" value="UniProtKB"/>
</dbReference>
<dbReference type="GO" id="GO:0005789">
    <property type="term" value="C:endoplasmic reticulum membrane"/>
    <property type="evidence" value="ECO:0000304"/>
    <property type="project" value="Reactome"/>
</dbReference>
<dbReference type="GO" id="GO:0016020">
    <property type="term" value="C:membrane"/>
    <property type="evidence" value="ECO:0000314"/>
    <property type="project" value="UniProtKB"/>
</dbReference>
<dbReference type="GO" id="GO:0005741">
    <property type="term" value="C:mitochondrial outer membrane"/>
    <property type="evidence" value="ECO:0007669"/>
    <property type="project" value="UniProtKB-SubCell"/>
</dbReference>
<dbReference type="GO" id="GO:0005778">
    <property type="term" value="C:peroxisomal membrane"/>
    <property type="evidence" value="ECO:0007669"/>
    <property type="project" value="UniProtKB-SubCell"/>
</dbReference>
<dbReference type="GO" id="GO:0005886">
    <property type="term" value="C:plasma membrane"/>
    <property type="evidence" value="ECO:0000303"/>
    <property type="project" value="UniProtKB"/>
</dbReference>
<dbReference type="GO" id="GO:0047676">
    <property type="term" value="F:arachidonate-CoA ligase activity"/>
    <property type="evidence" value="ECO:0000250"/>
    <property type="project" value="UniProtKB"/>
</dbReference>
<dbReference type="GO" id="GO:0005524">
    <property type="term" value="F:ATP binding"/>
    <property type="evidence" value="ECO:0007669"/>
    <property type="project" value="UniProtKB-KW"/>
</dbReference>
<dbReference type="GO" id="GO:0019899">
    <property type="term" value="F:enzyme binding"/>
    <property type="evidence" value="ECO:0000353"/>
    <property type="project" value="UniProtKB"/>
</dbReference>
<dbReference type="GO" id="GO:0004467">
    <property type="term" value="F:long-chain fatty acid-CoA ligase activity"/>
    <property type="evidence" value="ECO:0000314"/>
    <property type="project" value="UniProtKB"/>
</dbReference>
<dbReference type="GO" id="GO:0042803">
    <property type="term" value="F:protein homodimerization activity"/>
    <property type="evidence" value="ECO:0000314"/>
    <property type="project" value="UniProtKB"/>
</dbReference>
<dbReference type="GO" id="GO:0006637">
    <property type="term" value="P:acyl-CoA metabolic process"/>
    <property type="evidence" value="ECO:0000303"/>
    <property type="project" value="UniProtKB"/>
</dbReference>
<dbReference type="GO" id="GO:0001676">
    <property type="term" value="P:long-chain fatty acid metabolic process"/>
    <property type="evidence" value="ECO:0000314"/>
    <property type="project" value="UniProtKB"/>
</dbReference>
<dbReference type="GO" id="GO:0035338">
    <property type="term" value="P:long-chain fatty-acyl-CoA biosynthetic process"/>
    <property type="evidence" value="ECO:0000318"/>
    <property type="project" value="GO_Central"/>
</dbReference>
<dbReference type="GO" id="GO:0007405">
    <property type="term" value="P:neuroblast proliferation"/>
    <property type="evidence" value="ECO:0007669"/>
    <property type="project" value="Ensembl"/>
</dbReference>
<dbReference type="GO" id="GO:0000038">
    <property type="term" value="P:very long-chain fatty acid metabolic process"/>
    <property type="evidence" value="ECO:0000318"/>
    <property type="project" value="GO_Central"/>
</dbReference>
<dbReference type="CDD" id="cd05927">
    <property type="entry name" value="LC-FACS_euk"/>
    <property type="match status" value="1"/>
</dbReference>
<dbReference type="FunFam" id="3.40.50.12780:FF:000006">
    <property type="entry name" value="long-chain-fatty-acid--CoA ligase 6 isoform X2"/>
    <property type="match status" value="1"/>
</dbReference>
<dbReference type="Gene3D" id="3.40.50.12780">
    <property type="entry name" value="N-terminal domain of ligase-like"/>
    <property type="match status" value="1"/>
</dbReference>
<dbReference type="InterPro" id="IPR020845">
    <property type="entry name" value="AMP-binding_CS"/>
</dbReference>
<dbReference type="InterPro" id="IPR000873">
    <property type="entry name" value="AMP-dep_synth/lig_dom"/>
</dbReference>
<dbReference type="InterPro" id="IPR042099">
    <property type="entry name" value="ANL_N_sf"/>
</dbReference>
<dbReference type="InterPro" id="IPR045311">
    <property type="entry name" value="LC-FACS_euk"/>
</dbReference>
<dbReference type="PANTHER" id="PTHR43272">
    <property type="entry name" value="LONG-CHAIN-FATTY-ACID--COA LIGASE"/>
    <property type="match status" value="1"/>
</dbReference>
<dbReference type="PANTHER" id="PTHR43272:SF54">
    <property type="entry name" value="LONG-CHAIN-FATTY-ACID--COA LIGASE 6"/>
    <property type="match status" value="1"/>
</dbReference>
<dbReference type="Pfam" id="PF00501">
    <property type="entry name" value="AMP-binding"/>
    <property type="match status" value="1"/>
</dbReference>
<dbReference type="SUPFAM" id="SSF56801">
    <property type="entry name" value="Acetyl-CoA synthetase-like"/>
    <property type="match status" value="1"/>
</dbReference>
<dbReference type="PROSITE" id="PS00455">
    <property type="entry name" value="AMP_BINDING"/>
    <property type="match status" value="1"/>
</dbReference>
<proteinExistence type="evidence at protein level"/>
<evidence type="ECO:0000250" key="1"/>
<evidence type="ECO:0000250" key="2">
    <source>
        <dbReference type="UniProtKB" id="P33124"/>
    </source>
</evidence>
<evidence type="ECO:0000255" key="3"/>
<evidence type="ECO:0000269" key="4">
    <source>
    </source>
</evidence>
<evidence type="ECO:0000269" key="5">
    <source>
    </source>
</evidence>
<evidence type="ECO:0000269" key="6">
    <source>
    </source>
</evidence>
<evidence type="ECO:0000269" key="7">
    <source>
    </source>
</evidence>
<evidence type="ECO:0000303" key="8">
    <source>
    </source>
</evidence>
<evidence type="ECO:0000303" key="9">
    <source>
    </source>
</evidence>
<evidence type="ECO:0000303" key="10">
    <source>
    </source>
</evidence>
<evidence type="ECO:0000303" key="11">
    <source>
    </source>
</evidence>
<evidence type="ECO:0000303" key="12">
    <source>
    </source>
</evidence>
<evidence type="ECO:0000305" key="13"/>
<evidence type="ECO:0000305" key="14">
    <source>
    </source>
</evidence>
<evidence type="ECO:0000305" key="15">
    <source>
    </source>
</evidence>
<evidence type="ECO:0000312" key="16">
    <source>
        <dbReference type="HGNC" id="HGNC:16496"/>
    </source>
</evidence>
<keyword id="KW-0025">Alternative splicing</keyword>
<keyword id="KW-0067">ATP-binding</keyword>
<keyword id="KW-0160">Chromosomal rearrangement</keyword>
<keyword id="KW-0256">Endoplasmic reticulum</keyword>
<keyword id="KW-0276">Fatty acid metabolism</keyword>
<keyword id="KW-0436">Ligase</keyword>
<keyword id="KW-0443">Lipid metabolism</keyword>
<keyword id="KW-0460">Magnesium</keyword>
<keyword id="KW-0472">Membrane</keyword>
<keyword id="KW-0492">Microsome</keyword>
<keyword id="KW-0496">Mitochondrion</keyword>
<keyword id="KW-1000">Mitochondrion outer membrane</keyword>
<keyword id="KW-0547">Nucleotide-binding</keyword>
<keyword id="KW-0576">Peroxisome</keyword>
<keyword id="KW-1267">Proteomics identification</keyword>
<keyword id="KW-1185">Reference proteome</keyword>
<keyword id="KW-0812">Transmembrane</keyword>
<keyword id="KW-1133">Transmembrane helix</keyword>
<protein>
    <recommendedName>
        <fullName evidence="13">Long-chain-fatty-acid--CoA ligase 6</fullName>
        <ecNumber evidence="6 7">6.2.1.3</ecNumber>
    </recommendedName>
    <alternativeName>
        <fullName evidence="13">Arachidonate--CoA ligase</fullName>
        <ecNumber evidence="2">6.2.1.15</ecNumber>
    </alternativeName>
    <alternativeName>
        <fullName>Long-chain acyl-CoA synthetase 6</fullName>
        <shortName>LACS 6</shortName>
    </alternativeName>
</protein>
<accession>Q9UKU0</accession>
<accession>J3KPG3</accession>
<accession>O94924</accession>
<accession>O95829</accession>
<accession>Q108M9</accession>
<accession>Q108N0</accession>
<accession>Q4G191</accession>
<accession>Q86TN7</accession>
<feature type="chain" id="PRO_0000193115" description="Long-chain-fatty-acid--CoA ligase 6">
    <location>
        <begin position="1"/>
        <end position="697"/>
    </location>
</feature>
<feature type="transmembrane region" description="Helical; Signal-anchor for type III membrane protein" evidence="3">
    <location>
        <begin position="25"/>
        <end position="45"/>
    </location>
</feature>
<feature type="topological domain" description="Cytoplasmic" evidence="3">
    <location>
        <begin position="46"/>
        <end position="697"/>
    </location>
</feature>
<feature type="splice variant" id="VSP_037819" description="In isoform 1 and isoform 8." evidence="8">
    <original>M</original>
    <variation>MLTFFLVSGGSLWLFVEFVLSLLEKM</variation>
    <location>
        <position position="1"/>
    </location>
</feature>
<feature type="splice variant" id="VSP_046954" description="In isoform 9." evidence="11">
    <original>M</original>
    <variation>MPEFVLSLLEKM</variation>
    <location>
        <position position="1"/>
    </location>
</feature>
<feature type="splice variant" id="VSP_037820" description="In isoform 7." evidence="11">
    <location>
        <begin position="31"/>
        <end position="65"/>
    </location>
</feature>
<feature type="splice variant" id="VSP_037821" description="In isoform 6." evidence="12">
    <original>T</original>
    <variation>TGLSCQEGASATASTQ</variation>
    <location>
        <position position="192"/>
    </location>
</feature>
<feature type="splice variant" id="VSP_037822" description="In isoform 7." evidence="11">
    <location>
        <begin position="306"/>
        <end position="345"/>
    </location>
</feature>
<feature type="splice variant" id="VSP_021024" description="In isoform 3, isoform 2 and isoform 8." evidence="9 10">
    <original>KVIFPRQDDVLISFLPLAHMFERVI</original>
    <variation>SQWAPTCADVHISYLPLAHMFERMV</variation>
    <location>
        <begin position="306"/>
        <end position="330"/>
    </location>
</feature>
<feature type="splice variant" id="VSP_037823" description="In isoform 5." evidence="12">
    <location>
        <begin position="306"/>
        <end position="312"/>
    </location>
</feature>
<feature type="splice variant" id="VSP_000241" description="In isoform 2." evidence="9">
    <original>VKAIHIHSDMFSVQNGLLTPTLKAKRPELREYFKKQIEELYSISM</original>
    <variation>DLPQCLIQIKVFSKY</variation>
    <location>
        <begin position="653"/>
        <end position="697"/>
    </location>
</feature>
<feature type="sequence conflict" description="In Ref. 1; AAD47199." evidence="13" ref="1">
    <original>G</original>
    <variation>E</variation>
    <location>
        <position position="19"/>
    </location>
</feature>
<feature type="sequence conflict" description="In Ref. 1; AAD47199." evidence="13" ref="1">
    <original>H</original>
    <variation>Q</variation>
    <location>
        <position position="46"/>
    </location>
</feature>
<feature type="sequence conflict" description="In Ref. 7; AAH47453." evidence="13" ref="7">
    <original>E</original>
    <variation>A</variation>
    <location>
        <position position="257"/>
    </location>
</feature>
<feature type="sequence conflict" description="In Ref. 7; AAH26161." evidence="13" ref="7">
    <original>Q</original>
    <variation>L</variation>
    <location>
        <position position="260"/>
    </location>
</feature>
<feature type="sequence conflict" description="In Ref. 3; AAZ30714." evidence="13" ref="3">
    <original>K</original>
    <variation>R</variation>
    <location>
        <position position="356"/>
    </location>
</feature>
<feature type="sequence conflict" description="In Ref. 1; AAD47199 and 3; AAZ30714." evidence="13" ref="1 3">
    <original>S</original>
    <variation>P</variation>
    <location>
        <position position="696"/>
    </location>
</feature>
<organism>
    <name type="scientific">Homo sapiens</name>
    <name type="common">Human</name>
    <dbReference type="NCBI Taxonomy" id="9606"/>
    <lineage>
        <taxon>Eukaryota</taxon>
        <taxon>Metazoa</taxon>
        <taxon>Chordata</taxon>
        <taxon>Craniata</taxon>
        <taxon>Vertebrata</taxon>
        <taxon>Euteleostomi</taxon>
        <taxon>Mammalia</taxon>
        <taxon>Eutheria</taxon>
        <taxon>Euarchontoglires</taxon>
        <taxon>Primates</taxon>
        <taxon>Haplorrhini</taxon>
        <taxon>Catarrhini</taxon>
        <taxon>Hominidae</taxon>
        <taxon>Homo</taxon>
    </lineage>
</organism>
<comment type="function">
    <text evidence="6 7">Catalyzes the conversion of long-chain fatty acids to their active form acyl-CoA for both synthesis of cellular lipids, and degradation via beta-oxidation (PubMed:22633490, PubMed:24269233). Plays an important role in fatty acid metabolism in brain and the acyl-CoAs produced may be utilized exclusively for the synthesis of the brain lipid.</text>
</comment>
<comment type="catalytic activity">
    <reaction evidence="6 7">
        <text>a long-chain fatty acid + ATP + CoA = a long-chain fatty acyl-CoA + AMP + diphosphate</text>
        <dbReference type="Rhea" id="RHEA:15421"/>
        <dbReference type="ChEBI" id="CHEBI:30616"/>
        <dbReference type="ChEBI" id="CHEBI:33019"/>
        <dbReference type="ChEBI" id="CHEBI:57287"/>
        <dbReference type="ChEBI" id="CHEBI:57560"/>
        <dbReference type="ChEBI" id="CHEBI:83139"/>
        <dbReference type="ChEBI" id="CHEBI:456215"/>
        <dbReference type="EC" id="6.2.1.3"/>
    </reaction>
    <physiologicalReaction direction="left-to-right" evidence="14 15">
        <dbReference type="Rhea" id="RHEA:15422"/>
    </physiologicalReaction>
</comment>
<comment type="catalytic activity">
    <reaction evidence="2">
        <text>(5Z,8Z,11Z,14Z)-eicosatetraenoate + ATP + CoA = (5Z,8Z,11Z,14Z)-eicosatetraenoyl-CoA + AMP + diphosphate</text>
        <dbReference type="Rhea" id="RHEA:19713"/>
        <dbReference type="ChEBI" id="CHEBI:30616"/>
        <dbReference type="ChEBI" id="CHEBI:32395"/>
        <dbReference type="ChEBI" id="CHEBI:33019"/>
        <dbReference type="ChEBI" id="CHEBI:57287"/>
        <dbReference type="ChEBI" id="CHEBI:57368"/>
        <dbReference type="ChEBI" id="CHEBI:456215"/>
        <dbReference type="EC" id="6.2.1.15"/>
    </reaction>
    <physiologicalReaction direction="left-to-right" evidence="2">
        <dbReference type="Rhea" id="RHEA:19714"/>
    </physiologicalReaction>
</comment>
<comment type="catalytic activity">
    <reaction evidence="7">
        <text>hexadecanoate + ATP + CoA = hexadecanoyl-CoA + AMP + diphosphate</text>
        <dbReference type="Rhea" id="RHEA:30751"/>
        <dbReference type="ChEBI" id="CHEBI:7896"/>
        <dbReference type="ChEBI" id="CHEBI:30616"/>
        <dbReference type="ChEBI" id="CHEBI:33019"/>
        <dbReference type="ChEBI" id="CHEBI:57287"/>
        <dbReference type="ChEBI" id="CHEBI:57379"/>
        <dbReference type="ChEBI" id="CHEBI:456215"/>
    </reaction>
    <physiologicalReaction direction="left-to-right" evidence="15">
        <dbReference type="Rhea" id="RHEA:30752"/>
    </physiologicalReaction>
</comment>
<comment type="catalytic activity">
    <reaction evidence="6 7">
        <text>(E)-hexadec-2-enoate + ATP + CoA = (2E)-hexadecenoyl-CoA + AMP + diphosphate</text>
        <dbReference type="Rhea" id="RHEA:36139"/>
        <dbReference type="ChEBI" id="CHEBI:30616"/>
        <dbReference type="ChEBI" id="CHEBI:33019"/>
        <dbReference type="ChEBI" id="CHEBI:57287"/>
        <dbReference type="ChEBI" id="CHEBI:61526"/>
        <dbReference type="ChEBI" id="CHEBI:72745"/>
        <dbReference type="ChEBI" id="CHEBI:456215"/>
    </reaction>
    <physiologicalReaction direction="left-to-right" evidence="14 15">
        <dbReference type="Rhea" id="RHEA:36140"/>
    </physiologicalReaction>
</comment>
<comment type="catalytic activity">
    <reaction evidence="2">
        <text>15-hydroxy-(5Z,8Z,11Z,13E)-eicosatetraenoate + ATP + CoA = 15-hydroxy-(5Z,8Z,11Z,13E)-eicosatetraenoyl-CoA + AMP + diphosphate</text>
        <dbReference type="Rhea" id="RHEA:52116"/>
        <dbReference type="ChEBI" id="CHEBI:30616"/>
        <dbReference type="ChEBI" id="CHEBI:33019"/>
        <dbReference type="ChEBI" id="CHEBI:57287"/>
        <dbReference type="ChEBI" id="CHEBI:78832"/>
        <dbReference type="ChEBI" id="CHEBI:136409"/>
        <dbReference type="ChEBI" id="CHEBI:456215"/>
    </reaction>
    <physiologicalReaction direction="left-to-right" evidence="2">
        <dbReference type="Rhea" id="RHEA:52117"/>
    </physiologicalReaction>
</comment>
<comment type="catalytic activity">
    <reaction evidence="2">
        <text>12-hydroxy-(5Z,8Z,10E,14Z)-eicosatetraenoate + ATP + CoA = 12-hydroxy-(5Z,8Z,10E,14Z)-eicosatetraenoyl-CoA + AMP + diphosphate</text>
        <dbReference type="Rhea" id="RHEA:52112"/>
        <dbReference type="ChEBI" id="CHEBI:30616"/>
        <dbReference type="ChEBI" id="CHEBI:33019"/>
        <dbReference type="ChEBI" id="CHEBI:57287"/>
        <dbReference type="ChEBI" id="CHEBI:90718"/>
        <dbReference type="ChEBI" id="CHEBI:136408"/>
        <dbReference type="ChEBI" id="CHEBI:456215"/>
    </reaction>
    <physiologicalReaction direction="left-to-right" evidence="2">
        <dbReference type="Rhea" id="RHEA:52113"/>
    </physiologicalReaction>
</comment>
<comment type="catalytic activity">
    <reaction evidence="2">
        <text>5-hydroxy-(6E,8Z,11Z,14Z)-eicosatetraenoate + ATP + CoA = 5-hydroxy-(6E,8Z,11Z,14Z)-eicosatetraenoyl-CoA + AMP + diphosphate</text>
        <dbReference type="Rhea" id="RHEA:52108"/>
        <dbReference type="ChEBI" id="CHEBI:30616"/>
        <dbReference type="ChEBI" id="CHEBI:33019"/>
        <dbReference type="ChEBI" id="CHEBI:57287"/>
        <dbReference type="ChEBI" id="CHEBI:65341"/>
        <dbReference type="ChEBI" id="CHEBI:136407"/>
        <dbReference type="ChEBI" id="CHEBI:456215"/>
    </reaction>
    <physiologicalReaction direction="left-to-right" evidence="2">
        <dbReference type="Rhea" id="RHEA:52109"/>
    </physiologicalReaction>
</comment>
<comment type="cofactor">
    <cofactor>
        <name>Mg(2+)</name>
        <dbReference type="ChEBI" id="CHEBI:18420"/>
    </cofactor>
</comment>
<comment type="interaction">
    <interactant intactId="EBI-12883224">
        <id>Q9UKU0-7</id>
    </interactant>
    <interactant intactId="EBI-6309018">
        <id>Q9NV79</id>
        <label>PCMTD2</label>
    </interactant>
    <organismsDiffer>false</organismsDiffer>
    <experiments>3</experiments>
</comment>
<comment type="interaction">
    <interactant intactId="EBI-12883224">
        <id>Q9UKU0-7</id>
    </interactant>
    <interactant intactId="EBI-625509">
        <id>Q8N720</id>
        <label>ZNF655</label>
    </interactant>
    <organismsDiffer>false</organismsDiffer>
    <experiments>3</experiments>
</comment>
<comment type="subcellular location">
    <subcellularLocation>
        <location evidence="1">Mitochondrion outer membrane</location>
        <topology evidence="1">Single-pass type III membrane protein</topology>
    </subcellularLocation>
    <subcellularLocation>
        <location evidence="1">Peroxisome membrane</location>
        <topology evidence="1">Single-pass type III membrane protein</topology>
    </subcellularLocation>
    <subcellularLocation>
        <location evidence="1">Microsome membrane</location>
        <topology evidence="1">Single-pass type III membrane protein</topology>
    </subcellularLocation>
    <subcellularLocation>
        <location evidence="7">Endoplasmic reticulum membrane</location>
        <topology evidence="1">Single-pass type III membrane protein</topology>
    </subcellularLocation>
</comment>
<comment type="alternative products">
    <event type="alternative splicing"/>
    <isoform>
        <id>Q9UKU0-4</id>
        <name>4</name>
        <sequence type="displayed"/>
    </isoform>
    <isoform>
        <id>Q9UKU0-1</id>
        <name>1</name>
        <name>Long</name>
        <name>v2</name>
        <sequence type="described" ref="VSP_037819"/>
    </isoform>
    <isoform>
        <id>Q9UKU0-2</id>
        <name>2</name>
        <name>Short</name>
        <sequence type="described" ref="VSP_021024 VSP_000241"/>
    </isoform>
    <isoform>
        <id>Q9UKU0-3</id>
        <name>3</name>
        <sequence type="described" ref="VSP_021024"/>
    </isoform>
    <isoform>
        <id>Q9UKU0-5</id>
        <name>5</name>
        <name>v4</name>
        <sequence type="described" ref="VSP_037823"/>
    </isoform>
    <isoform>
        <id>Q9UKU0-6</id>
        <name>6</name>
        <name>v5</name>
        <sequence type="described" ref="VSP_037821"/>
    </isoform>
    <isoform>
        <id>Q9UKU0-7</id>
        <name>7</name>
        <name>v3</name>
        <sequence type="described" ref="VSP_037820 VSP_037822"/>
    </isoform>
    <isoform>
        <id>Q9UKU0-8</id>
        <name>8</name>
        <name>v1</name>
        <sequence type="described" ref="VSP_037819 VSP_021024"/>
    </isoform>
    <isoform>
        <id>Q9UKU0-9</id>
        <name>9</name>
        <sequence type="described" ref="VSP_046954"/>
    </isoform>
</comment>
<comment type="tissue specificity">
    <text evidence="5">Expressed predominantly in erythrocyte precursors, in particular in reticulocytes, fetal blood cells derived from fetal liver, hemopoietic stem cells from cord blood, bone marrow and brain.</text>
</comment>
<comment type="developmental stage">
    <text>Expression is low at earlier stages of erythroid development but is very high in reticulocytes.</text>
</comment>
<comment type="disease">
    <text evidence="4">A chromosomal aberration involving ACSL6 may be a cause of myelodysplastic syndrome with basophilia. Translocation t(5;12)(q31;p13) with ETV6.</text>
</comment>
<comment type="disease">
    <text evidence="4">A chromosomal aberration involving ACSL6 may be a cause of acute myelogenous leukemia with eosinophilia. Translocation t(5;12)(q31;p13) with ETV6.</text>
</comment>
<comment type="disease">
    <text evidence="4">A chromosomal aberration involving ACSL6 may be a cause of acute eosinophilic leukemia (AEL). Translocation t(5;12)(q31;p13) with ETV6.</text>
</comment>
<comment type="similarity">
    <text evidence="13">Belongs to the ATP-dependent AMP-binding enzyme family.</text>
</comment>
<comment type="sequence caution" evidence="13">
    <conflict type="erroneous termination">
        <sequence resource="EMBL-CDS" id="AAH26161"/>
    </conflict>
    <text>Truncated C-terminus.</text>
</comment>
<comment type="sequence caution" evidence="13">
    <conflict type="erroneous initiation">
        <sequence resource="EMBL-CDS" id="BAA74860"/>
    </conflict>
    <text>Extended N-terminus.</text>
</comment>
<gene>
    <name evidence="16" type="primary">ACSL6</name>
    <name type="synonym">ACS2</name>
    <name type="synonym">FACL6</name>
    <name type="synonym">KIAA0837</name>
    <name type="synonym">LACS5</name>
</gene>